<reference key="1">
    <citation type="journal article" date="2003" name="Plant Mol. Biol.">
        <title>Characterization of all the subunits of replication factor C from a higher plant, rice (Oryza sativa L.), and their relation to development.</title>
        <authorList>
            <person name="Furukawa T."/>
            <person name="Ishibashi T."/>
            <person name="Kimura S."/>
            <person name="Tanaka H."/>
            <person name="Hashimoto J."/>
            <person name="Sakaguchi K."/>
        </authorList>
    </citation>
    <scope>NUCLEOTIDE SEQUENCE [MRNA]</scope>
    <scope>TISSUE SPECIFICITY</scope>
    <scope>INDUCTION</scope>
    <scope>GENE FAMILY</scope>
    <source>
        <strain>cv. Nipponbare</strain>
    </source>
</reference>
<reference key="2">
    <citation type="journal article" date="2005" name="Genome Res.">
        <title>Sequence, annotation, and analysis of synteny between rice chromosome 3 and diverged grass species.</title>
        <authorList>
            <consortium name="The rice chromosome 3 sequencing consortium"/>
            <person name="Buell C.R."/>
            <person name="Yuan Q."/>
            <person name="Ouyang S."/>
            <person name="Liu J."/>
            <person name="Zhu W."/>
            <person name="Wang A."/>
            <person name="Maiti R."/>
            <person name="Haas B."/>
            <person name="Wortman J."/>
            <person name="Pertea M."/>
            <person name="Jones K.M."/>
            <person name="Kim M."/>
            <person name="Overton L."/>
            <person name="Tsitrin T."/>
            <person name="Fadrosh D."/>
            <person name="Bera J."/>
            <person name="Weaver B."/>
            <person name="Jin S."/>
            <person name="Johri S."/>
            <person name="Reardon M."/>
            <person name="Webb K."/>
            <person name="Hill J."/>
            <person name="Moffat K."/>
            <person name="Tallon L."/>
            <person name="Van Aken S."/>
            <person name="Lewis M."/>
            <person name="Utterback T."/>
            <person name="Feldblyum T."/>
            <person name="Zismann V."/>
            <person name="Iobst S."/>
            <person name="Hsiao J."/>
            <person name="de Vazeille A.R."/>
            <person name="Salzberg S.L."/>
            <person name="White O."/>
            <person name="Fraser C.M."/>
            <person name="Yu Y."/>
            <person name="Kim H."/>
            <person name="Rambo T."/>
            <person name="Currie J."/>
            <person name="Collura K."/>
            <person name="Kernodle-Thompson S."/>
            <person name="Wei F."/>
            <person name="Kudrna K."/>
            <person name="Ammiraju J.S.S."/>
            <person name="Luo M."/>
            <person name="Goicoechea J.L."/>
            <person name="Wing R.A."/>
            <person name="Henry D."/>
            <person name="Oates R."/>
            <person name="Palmer M."/>
            <person name="Pries G."/>
            <person name="Saski C."/>
            <person name="Simmons J."/>
            <person name="Soderlund C."/>
            <person name="Nelson W."/>
            <person name="de la Bastide M."/>
            <person name="Spiegel L."/>
            <person name="Nascimento L."/>
            <person name="Huang E."/>
            <person name="Preston R."/>
            <person name="Zutavern T."/>
            <person name="Palmer L."/>
            <person name="O'Shaughnessy A."/>
            <person name="Dike S."/>
            <person name="McCombie W.R."/>
            <person name="Minx P."/>
            <person name="Cordum H."/>
            <person name="Wilson R."/>
            <person name="Jin W."/>
            <person name="Lee H.R."/>
            <person name="Jiang J."/>
            <person name="Jackson S."/>
        </authorList>
    </citation>
    <scope>NUCLEOTIDE SEQUENCE [LARGE SCALE GENOMIC DNA]</scope>
    <source>
        <strain>cv. Nipponbare</strain>
    </source>
</reference>
<reference key="3">
    <citation type="journal article" date="2005" name="Nature">
        <title>The map-based sequence of the rice genome.</title>
        <authorList>
            <consortium name="International rice genome sequencing project (IRGSP)"/>
        </authorList>
    </citation>
    <scope>NUCLEOTIDE SEQUENCE [LARGE SCALE GENOMIC DNA]</scope>
    <source>
        <strain>cv. Nipponbare</strain>
    </source>
</reference>
<reference key="4">
    <citation type="journal article" date="2008" name="Nucleic Acids Res.">
        <title>The rice annotation project database (RAP-DB): 2008 update.</title>
        <authorList>
            <consortium name="The rice annotation project (RAP)"/>
        </authorList>
    </citation>
    <scope>GENOME REANNOTATION</scope>
    <source>
        <strain>cv. Nipponbare</strain>
    </source>
</reference>
<reference key="5">
    <citation type="journal article" date="2013" name="Rice">
        <title>Improvement of the Oryza sativa Nipponbare reference genome using next generation sequence and optical map data.</title>
        <authorList>
            <person name="Kawahara Y."/>
            <person name="de la Bastide M."/>
            <person name="Hamilton J.P."/>
            <person name="Kanamori H."/>
            <person name="McCombie W.R."/>
            <person name="Ouyang S."/>
            <person name="Schwartz D.C."/>
            <person name="Tanaka T."/>
            <person name="Wu J."/>
            <person name="Zhou S."/>
            <person name="Childs K.L."/>
            <person name="Davidson R.M."/>
            <person name="Lin H."/>
            <person name="Quesada-Ocampo L."/>
            <person name="Vaillancourt B."/>
            <person name="Sakai H."/>
            <person name="Lee S.S."/>
            <person name="Kim J."/>
            <person name="Numa H."/>
            <person name="Itoh T."/>
            <person name="Buell C.R."/>
            <person name="Matsumoto T."/>
        </authorList>
    </citation>
    <scope>GENOME REANNOTATION</scope>
    <source>
        <strain>cv. Nipponbare</strain>
    </source>
</reference>
<reference key="6">
    <citation type="journal article" date="2005" name="PLoS Biol.">
        <title>The genomes of Oryza sativa: a history of duplications.</title>
        <authorList>
            <person name="Yu J."/>
            <person name="Wang J."/>
            <person name="Lin W."/>
            <person name="Li S."/>
            <person name="Li H."/>
            <person name="Zhou J."/>
            <person name="Ni P."/>
            <person name="Dong W."/>
            <person name="Hu S."/>
            <person name="Zeng C."/>
            <person name="Zhang J."/>
            <person name="Zhang Y."/>
            <person name="Li R."/>
            <person name="Xu Z."/>
            <person name="Li S."/>
            <person name="Li X."/>
            <person name="Zheng H."/>
            <person name="Cong L."/>
            <person name="Lin L."/>
            <person name="Yin J."/>
            <person name="Geng J."/>
            <person name="Li G."/>
            <person name="Shi J."/>
            <person name="Liu J."/>
            <person name="Lv H."/>
            <person name="Li J."/>
            <person name="Wang J."/>
            <person name="Deng Y."/>
            <person name="Ran L."/>
            <person name="Shi X."/>
            <person name="Wang X."/>
            <person name="Wu Q."/>
            <person name="Li C."/>
            <person name="Ren X."/>
            <person name="Wang J."/>
            <person name="Wang X."/>
            <person name="Li D."/>
            <person name="Liu D."/>
            <person name="Zhang X."/>
            <person name="Ji Z."/>
            <person name="Zhao W."/>
            <person name="Sun Y."/>
            <person name="Zhang Z."/>
            <person name="Bao J."/>
            <person name="Han Y."/>
            <person name="Dong L."/>
            <person name="Ji J."/>
            <person name="Chen P."/>
            <person name="Wu S."/>
            <person name="Liu J."/>
            <person name="Xiao Y."/>
            <person name="Bu D."/>
            <person name="Tan J."/>
            <person name="Yang L."/>
            <person name="Ye C."/>
            <person name="Zhang J."/>
            <person name="Xu J."/>
            <person name="Zhou Y."/>
            <person name="Yu Y."/>
            <person name="Zhang B."/>
            <person name="Zhuang S."/>
            <person name="Wei H."/>
            <person name="Liu B."/>
            <person name="Lei M."/>
            <person name="Yu H."/>
            <person name="Li Y."/>
            <person name="Xu H."/>
            <person name="Wei S."/>
            <person name="He X."/>
            <person name="Fang L."/>
            <person name="Zhang Z."/>
            <person name="Zhang Y."/>
            <person name="Huang X."/>
            <person name="Su Z."/>
            <person name="Tong W."/>
            <person name="Li J."/>
            <person name="Tong Z."/>
            <person name="Li S."/>
            <person name="Ye J."/>
            <person name="Wang L."/>
            <person name="Fang L."/>
            <person name="Lei T."/>
            <person name="Chen C.-S."/>
            <person name="Chen H.-C."/>
            <person name="Xu Z."/>
            <person name="Li H."/>
            <person name="Huang H."/>
            <person name="Zhang F."/>
            <person name="Xu H."/>
            <person name="Li N."/>
            <person name="Zhao C."/>
            <person name="Li S."/>
            <person name="Dong L."/>
            <person name="Huang Y."/>
            <person name="Li L."/>
            <person name="Xi Y."/>
            <person name="Qi Q."/>
            <person name="Li W."/>
            <person name="Zhang B."/>
            <person name="Hu W."/>
            <person name="Zhang Y."/>
            <person name="Tian X."/>
            <person name="Jiao Y."/>
            <person name="Liang X."/>
            <person name="Jin J."/>
            <person name="Gao L."/>
            <person name="Zheng W."/>
            <person name="Hao B."/>
            <person name="Liu S.-M."/>
            <person name="Wang W."/>
            <person name="Yuan L."/>
            <person name="Cao M."/>
            <person name="McDermott J."/>
            <person name="Samudrala R."/>
            <person name="Wang J."/>
            <person name="Wong G.K.-S."/>
            <person name="Yang H."/>
        </authorList>
    </citation>
    <scope>NUCLEOTIDE SEQUENCE [LARGE SCALE GENOMIC DNA]</scope>
    <source>
        <strain>cv. Nipponbare</strain>
    </source>
</reference>
<reference key="7">
    <citation type="journal article" date="2003" name="Science">
        <title>Collection, mapping, and annotation of over 28,000 cDNA clones from japonica rice.</title>
        <authorList>
            <consortium name="The rice full-length cDNA consortium"/>
        </authorList>
    </citation>
    <scope>NUCLEOTIDE SEQUENCE [LARGE SCALE MRNA]</scope>
    <source>
        <strain>cv. Nipponbare</strain>
    </source>
</reference>
<feature type="chain" id="PRO_0000422638" description="Replication factor C subunit 5">
    <location>
        <begin position="1"/>
        <end position="354"/>
    </location>
</feature>
<feature type="binding site" evidence="2">
    <location>
        <begin position="40"/>
        <end position="47"/>
    </location>
    <ligand>
        <name>ATP</name>
        <dbReference type="ChEBI" id="CHEBI:30616"/>
    </ligand>
</feature>
<feature type="sequence conflict" description="In Ref. 1; BAC76086." evidence="4" ref="1">
    <original>A</original>
    <variation>V</variation>
    <location>
        <position position="125"/>
    </location>
</feature>
<evidence type="ECO:0000250" key="1"/>
<evidence type="ECO:0000255" key="2"/>
<evidence type="ECO:0000269" key="3">
    <source>
    </source>
</evidence>
<evidence type="ECO:0000305" key="4"/>
<accession>Q852K3</accession>
<accession>A0A0P0W4P5</accession>
<accession>Q84N07</accession>
<comment type="function">
    <text evidence="1">May be involved in DNA replication and thus regulate cell proliferation.</text>
</comment>
<comment type="subunit">
    <text evidence="1">Heterotetramer of subunits RFC2, RFC3, RFC4 and RFC5 that can form a complex with RFC1.</text>
</comment>
<comment type="subcellular location">
    <subcellularLocation>
        <location evidence="1">Nucleus</location>
    </subcellularLocation>
</comment>
<comment type="tissue specificity">
    <text evidence="3">Expressed in roots, leaves, shoot apical meristem (SAM), flag leaves and panicles.</text>
</comment>
<comment type="induction">
    <text evidence="3">Down-regulated by sucrose starvation.</text>
</comment>
<comment type="similarity">
    <text evidence="4">Belongs to the activator 1 small subunits family.</text>
</comment>
<proteinExistence type="evidence at transcript level"/>
<sequence length="354" mass="40524">MLWVDKYRPKTLDKVTVHDQVAQNLKKLVAEQDCPHLLFYGPSGSGKKTLVMALIKQMFGAGADKVKMENKTWKIDTGSRNIEIELAMLSSAHHVEMNPSDAGFQDRYVVQEVIKEMAKNRPIDAKGKRAFKVLVLNEVDKLSREAQHSLRRTMEKYSASCRLILCCNSSSKVTEAVRSRCLNVRVNAPSEDQIVQVLEFIGKKENLQLPFGFAARIAAQSNRNLRRAILFFETCKVQQYPFTSNQVAPPLDWEQYVSEIAADIMKEQSPKRLFAVRQKFYELLVNCIPPESILKKLLAELLKKLDSDLKHEICHWAAHYEHKMRLGSKAIFHLEAFVAKFMSIYKEFLVSTFG</sequence>
<name>RFC5_ORYSJ</name>
<protein>
    <recommendedName>
        <fullName>Replication factor C subunit 5</fullName>
        <shortName>OsRFC5</shortName>
    </recommendedName>
    <alternativeName>
        <fullName>Activator 1 subunit 5</fullName>
    </alternativeName>
</protein>
<keyword id="KW-0067">ATP-binding</keyword>
<keyword id="KW-0235">DNA replication</keyword>
<keyword id="KW-0547">Nucleotide-binding</keyword>
<keyword id="KW-0539">Nucleus</keyword>
<keyword id="KW-1185">Reference proteome</keyword>
<dbReference type="EMBL" id="AB109201">
    <property type="protein sequence ID" value="BAC76086.1"/>
    <property type="molecule type" value="mRNA"/>
</dbReference>
<dbReference type="EMBL" id="AC090871">
    <property type="protein sequence ID" value="AAO37979.1"/>
    <property type="molecule type" value="Genomic_DNA"/>
</dbReference>
<dbReference type="EMBL" id="DP000009">
    <property type="protein sequence ID" value="ABF99302.1"/>
    <property type="molecule type" value="Genomic_DNA"/>
</dbReference>
<dbReference type="EMBL" id="AP008209">
    <property type="protein sequence ID" value="BAF13439.1"/>
    <property type="molecule type" value="Genomic_DNA"/>
</dbReference>
<dbReference type="EMBL" id="AP014959">
    <property type="protein sequence ID" value="BAS86798.1"/>
    <property type="molecule type" value="Genomic_DNA"/>
</dbReference>
<dbReference type="EMBL" id="CM000140">
    <property type="protein sequence ID" value="EEE60080.1"/>
    <property type="molecule type" value="Genomic_DNA"/>
</dbReference>
<dbReference type="EMBL" id="AK059559">
    <property type="protein sequence ID" value="BAG87033.1"/>
    <property type="molecule type" value="mRNA"/>
</dbReference>
<dbReference type="EMBL" id="AK103751">
    <property type="protein sequence ID" value="BAG96243.1"/>
    <property type="molecule type" value="mRNA"/>
</dbReference>
<dbReference type="RefSeq" id="XP_015630600.1">
    <property type="nucleotide sequence ID" value="XM_015775114.1"/>
</dbReference>
<dbReference type="SMR" id="Q852K3"/>
<dbReference type="FunCoup" id="Q852K3">
    <property type="interactions" value="1827"/>
</dbReference>
<dbReference type="STRING" id="39947.Q852K3"/>
<dbReference type="PaxDb" id="39947-Q852K3"/>
<dbReference type="EnsemblPlants" id="Os03t0792600-01">
    <property type="protein sequence ID" value="Os03t0792600-01"/>
    <property type="gene ID" value="Os03g0792600"/>
</dbReference>
<dbReference type="EnsemblPlants" id="Os03t0792600-02">
    <property type="protein sequence ID" value="Os03t0792600-02"/>
    <property type="gene ID" value="Os03g0792600"/>
</dbReference>
<dbReference type="Gramene" id="Os03t0792600-01">
    <property type="protein sequence ID" value="Os03t0792600-01"/>
    <property type="gene ID" value="Os03g0792600"/>
</dbReference>
<dbReference type="Gramene" id="Os03t0792600-02">
    <property type="protein sequence ID" value="Os03t0792600-02"/>
    <property type="gene ID" value="Os03g0792600"/>
</dbReference>
<dbReference type="KEGG" id="dosa:Os03g0792600"/>
<dbReference type="eggNOG" id="KOG2035">
    <property type="taxonomic scope" value="Eukaryota"/>
</dbReference>
<dbReference type="HOGENOM" id="CLU_042324_5_0_1"/>
<dbReference type="InParanoid" id="Q852K3"/>
<dbReference type="OMA" id="LKADIMH"/>
<dbReference type="OrthoDB" id="761538at2759"/>
<dbReference type="PlantReactome" id="R-OSA-9675815">
    <property type="pathway name" value="Leading strand synthesis"/>
</dbReference>
<dbReference type="Proteomes" id="UP000000763">
    <property type="component" value="Chromosome 3"/>
</dbReference>
<dbReference type="Proteomes" id="UP000007752">
    <property type="component" value="Chromosome 3"/>
</dbReference>
<dbReference type="Proteomes" id="UP000059680">
    <property type="component" value="Chromosome 3"/>
</dbReference>
<dbReference type="GO" id="GO:0005663">
    <property type="term" value="C:DNA replication factor C complex"/>
    <property type="evidence" value="ECO:0000318"/>
    <property type="project" value="GO_Central"/>
</dbReference>
<dbReference type="GO" id="GO:0005634">
    <property type="term" value="C:nucleus"/>
    <property type="evidence" value="ECO:0000318"/>
    <property type="project" value="GO_Central"/>
</dbReference>
<dbReference type="GO" id="GO:0005524">
    <property type="term" value="F:ATP binding"/>
    <property type="evidence" value="ECO:0007669"/>
    <property type="project" value="UniProtKB-KW"/>
</dbReference>
<dbReference type="GO" id="GO:0016887">
    <property type="term" value="F:ATP hydrolysis activity"/>
    <property type="evidence" value="ECO:0007669"/>
    <property type="project" value="InterPro"/>
</dbReference>
<dbReference type="GO" id="GO:0003677">
    <property type="term" value="F:DNA binding"/>
    <property type="evidence" value="ECO:0007669"/>
    <property type="project" value="InterPro"/>
</dbReference>
<dbReference type="GO" id="GO:0006281">
    <property type="term" value="P:DNA repair"/>
    <property type="evidence" value="ECO:0000318"/>
    <property type="project" value="GO_Central"/>
</dbReference>
<dbReference type="GO" id="GO:0006261">
    <property type="term" value="P:DNA-templated DNA replication"/>
    <property type="evidence" value="ECO:0000318"/>
    <property type="project" value="GO_Central"/>
</dbReference>
<dbReference type="CDD" id="cd00009">
    <property type="entry name" value="AAA"/>
    <property type="match status" value="1"/>
</dbReference>
<dbReference type="FunFam" id="1.20.272.10:FF:000002">
    <property type="entry name" value="Replication factor C subunit 3"/>
    <property type="match status" value="1"/>
</dbReference>
<dbReference type="FunFam" id="1.10.8.60:FF:000030">
    <property type="entry name" value="replication factor C subunit 3"/>
    <property type="match status" value="1"/>
</dbReference>
<dbReference type="FunFam" id="3.40.50.300:FF:000136">
    <property type="entry name" value="Replication factor C subunit 5"/>
    <property type="match status" value="1"/>
</dbReference>
<dbReference type="Gene3D" id="1.10.8.60">
    <property type="match status" value="1"/>
</dbReference>
<dbReference type="Gene3D" id="1.20.272.10">
    <property type="match status" value="1"/>
</dbReference>
<dbReference type="Gene3D" id="3.40.50.300">
    <property type="entry name" value="P-loop containing nucleotide triphosphate hydrolases"/>
    <property type="match status" value="1"/>
</dbReference>
<dbReference type="InterPro" id="IPR003593">
    <property type="entry name" value="AAA+_ATPase"/>
</dbReference>
<dbReference type="InterPro" id="IPR008921">
    <property type="entry name" value="DNA_pol3_clamp-load_cplx_C"/>
</dbReference>
<dbReference type="InterPro" id="IPR050238">
    <property type="entry name" value="DNA_Rep/Repair_Clamp_Loader"/>
</dbReference>
<dbReference type="InterPro" id="IPR027417">
    <property type="entry name" value="P-loop_NTPase"/>
</dbReference>
<dbReference type="PANTHER" id="PTHR11669">
    <property type="entry name" value="REPLICATION FACTOR C / DNA POLYMERASE III GAMMA-TAU SUBUNIT"/>
    <property type="match status" value="1"/>
</dbReference>
<dbReference type="PANTHER" id="PTHR11669:SF1">
    <property type="entry name" value="REPLICATION FACTOR C SUBUNIT 3"/>
    <property type="match status" value="1"/>
</dbReference>
<dbReference type="Pfam" id="PF13177">
    <property type="entry name" value="DNA_pol3_delta2"/>
    <property type="match status" value="1"/>
</dbReference>
<dbReference type="Pfam" id="PF21960">
    <property type="entry name" value="RCF1-5-like_lid"/>
    <property type="match status" value="1"/>
</dbReference>
<dbReference type="Pfam" id="PF22534">
    <property type="entry name" value="RFC_C"/>
    <property type="match status" value="1"/>
</dbReference>
<dbReference type="SMART" id="SM00382">
    <property type="entry name" value="AAA"/>
    <property type="match status" value="1"/>
</dbReference>
<dbReference type="SUPFAM" id="SSF52540">
    <property type="entry name" value="P-loop containing nucleoside triphosphate hydrolases"/>
    <property type="match status" value="1"/>
</dbReference>
<dbReference type="SUPFAM" id="SSF48019">
    <property type="entry name" value="post-AAA+ oligomerization domain-like"/>
    <property type="match status" value="1"/>
</dbReference>
<gene>
    <name type="primary">RFC5</name>
    <name type="ordered locus">Os03g0792600</name>
    <name type="ordered locus">LOC_Os03g57870</name>
    <name type="ORF">OsJ_12910</name>
    <name type="ORF">OSJNBb0060J21.20</name>
</gene>
<organism>
    <name type="scientific">Oryza sativa subsp. japonica</name>
    <name type="common">Rice</name>
    <dbReference type="NCBI Taxonomy" id="39947"/>
    <lineage>
        <taxon>Eukaryota</taxon>
        <taxon>Viridiplantae</taxon>
        <taxon>Streptophyta</taxon>
        <taxon>Embryophyta</taxon>
        <taxon>Tracheophyta</taxon>
        <taxon>Spermatophyta</taxon>
        <taxon>Magnoliopsida</taxon>
        <taxon>Liliopsida</taxon>
        <taxon>Poales</taxon>
        <taxon>Poaceae</taxon>
        <taxon>BOP clade</taxon>
        <taxon>Oryzoideae</taxon>
        <taxon>Oryzeae</taxon>
        <taxon>Oryzinae</taxon>
        <taxon>Oryza</taxon>
        <taxon>Oryza sativa</taxon>
    </lineage>
</organism>